<feature type="chain" id="PRO_1000139547" description="CTP synthase">
    <location>
        <begin position="1"/>
        <end position="543"/>
    </location>
</feature>
<feature type="domain" description="Glutamine amidotransferase type-1" evidence="1">
    <location>
        <begin position="291"/>
        <end position="542"/>
    </location>
</feature>
<feature type="region of interest" description="Amidoligase domain" evidence="1">
    <location>
        <begin position="1"/>
        <end position="265"/>
    </location>
</feature>
<feature type="active site" description="Nucleophile; for glutamine hydrolysis" evidence="1">
    <location>
        <position position="380"/>
    </location>
</feature>
<feature type="active site" evidence="1">
    <location>
        <position position="515"/>
    </location>
</feature>
<feature type="active site" evidence="1">
    <location>
        <position position="517"/>
    </location>
</feature>
<feature type="binding site" evidence="1">
    <location>
        <position position="13"/>
    </location>
    <ligand>
        <name>CTP</name>
        <dbReference type="ChEBI" id="CHEBI:37563"/>
        <note>allosteric inhibitor</note>
    </ligand>
</feature>
<feature type="binding site" evidence="1">
    <location>
        <position position="13"/>
    </location>
    <ligand>
        <name>UTP</name>
        <dbReference type="ChEBI" id="CHEBI:46398"/>
    </ligand>
</feature>
<feature type="binding site" evidence="1">
    <location>
        <begin position="14"/>
        <end position="19"/>
    </location>
    <ligand>
        <name>ATP</name>
        <dbReference type="ChEBI" id="CHEBI:30616"/>
    </ligand>
</feature>
<feature type="binding site" evidence="1">
    <location>
        <position position="54"/>
    </location>
    <ligand>
        <name>L-glutamine</name>
        <dbReference type="ChEBI" id="CHEBI:58359"/>
    </ligand>
</feature>
<feature type="binding site" evidence="1">
    <location>
        <position position="71"/>
    </location>
    <ligand>
        <name>ATP</name>
        <dbReference type="ChEBI" id="CHEBI:30616"/>
    </ligand>
</feature>
<feature type="binding site" evidence="1">
    <location>
        <position position="71"/>
    </location>
    <ligand>
        <name>Mg(2+)</name>
        <dbReference type="ChEBI" id="CHEBI:18420"/>
    </ligand>
</feature>
<feature type="binding site" evidence="1">
    <location>
        <position position="139"/>
    </location>
    <ligand>
        <name>Mg(2+)</name>
        <dbReference type="ChEBI" id="CHEBI:18420"/>
    </ligand>
</feature>
<feature type="binding site" evidence="1">
    <location>
        <begin position="146"/>
        <end position="148"/>
    </location>
    <ligand>
        <name>CTP</name>
        <dbReference type="ChEBI" id="CHEBI:37563"/>
        <note>allosteric inhibitor</note>
    </ligand>
</feature>
<feature type="binding site" evidence="1">
    <location>
        <begin position="186"/>
        <end position="191"/>
    </location>
    <ligand>
        <name>CTP</name>
        <dbReference type="ChEBI" id="CHEBI:37563"/>
        <note>allosteric inhibitor</note>
    </ligand>
</feature>
<feature type="binding site" evidence="1">
    <location>
        <begin position="186"/>
        <end position="191"/>
    </location>
    <ligand>
        <name>UTP</name>
        <dbReference type="ChEBI" id="CHEBI:46398"/>
    </ligand>
</feature>
<feature type="binding site" evidence="1">
    <location>
        <position position="222"/>
    </location>
    <ligand>
        <name>CTP</name>
        <dbReference type="ChEBI" id="CHEBI:37563"/>
        <note>allosteric inhibitor</note>
    </ligand>
</feature>
<feature type="binding site" evidence="1">
    <location>
        <position position="222"/>
    </location>
    <ligand>
        <name>UTP</name>
        <dbReference type="ChEBI" id="CHEBI:46398"/>
    </ligand>
</feature>
<feature type="binding site" evidence="1">
    <location>
        <begin position="238"/>
        <end position="240"/>
    </location>
    <ligand>
        <name>ATP</name>
        <dbReference type="ChEBI" id="CHEBI:30616"/>
    </ligand>
</feature>
<feature type="binding site" evidence="1">
    <location>
        <position position="353"/>
    </location>
    <ligand>
        <name>L-glutamine</name>
        <dbReference type="ChEBI" id="CHEBI:58359"/>
    </ligand>
</feature>
<feature type="binding site" evidence="1">
    <location>
        <begin position="381"/>
        <end position="384"/>
    </location>
    <ligand>
        <name>L-glutamine</name>
        <dbReference type="ChEBI" id="CHEBI:58359"/>
    </ligand>
</feature>
<feature type="binding site" evidence="1">
    <location>
        <position position="404"/>
    </location>
    <ligand>
        <name>L-glutamine</name>
        <dbReference type="ChEBI" id="CHEBI:58359"/>
    </ligand>
</feature>
<feature type="binding site" evidence="1">
    <location>
        <position position="470"/>
    </location>
    <ligand>
        <name>L-glutamine</name>
        <dbReference type="ChEBI" id="CHEBI:58359"/>
    </ligand>
</feature>
<sequence>MARYIFITGGVVSSLGKGLASAALGALLQARGYKVRLRKLDPYLNLDPGTMSPYQHGEVFVTDDGAETDLDLGHYERFTGRPATRADNITTGRIYQDILTKERRGDYLGATIQVVPHVTNAIKEFIVDSNDAYDFVLVEIGGTVGDIEGLPFFEAIRQIKNDLPRGDVIYIHLTLLPYIPSAGELKTKPTQHSVKELRSIGIQPDILLCRTDRSIPKEERRKLGLFCNVRESAVIEARDADSIYAVPEAYHAAGLDEEVLAAFGIASKGEPGLDRWTVINERIRNPEGEVTIAIVGKYTGMKDAYKSLIEALSHGGIANKVKVNIDWIESEVFENEDPAPFLEHVNGILVPGGFGQRGAEGKIEAARFARERNVPYFGICFGMQMAVIEAARNLAGIADANSTEFGPTKEPLVGLMTEWLRGNQLEKRSNAGDLGGTMRLGAYPAALKRGSRVSQIYGDVLEISERHRHRYEVNTAYKDRLEQHGLRFSGLSPDGVLPEIVEYEGHPWFIGVQFHPELKSRPFEPHPLFASFIEAAMAQSRLV</sequence>
<protein>
    <recommendedName>
        <fullName evidence="1">CTP synthase</fullName>
        <ecNumber evidence="1">6.3.4.2</ecNumber>
    </recommendedName>
    <alternativeName>
        <fullName evidence="1">Cytidine 5'-triphosphate synthase</fullName>
    </alternativeName>
    <alternativeName>
        <fullName evidence="1">Cytidine triphosphate synthetase</fullName>
        <shortName evidence="1">CTP synthetase</shortName>
        <shortName evidence="1">CTPS</shortName>
    </alternativeName>
    <alternativeName>
        <fullName evidence="1">UTP--ammonia ligase</fullName>
    </alternativeName>
</protein>
<comment type="function">
    <text evidence="1">Catalyzes the ATP-dependent amination of UTP to CTP with either L-glutamine or ammonia as the source of nitrogen. Regulates intracellular CTP levels through interactions with the four ribonucleotide triphosphates.</text>
</comment>
<comment type="catalytic activity">
    <reaction evidence="1">
        <text>UTP + L-glutamine + ATP + H2O = CTP + L-glutamate + ADP + phosphate + 2 H(+)</text>
        <dbReference type="Rhea" id="RHEA:26426"/>
        <dbReference type="ChEBI" id="CHEBI:15377"/>
        <dbReference type="ChEBI" id="CHEBI:15378"/>
        <dbReference type="ChEBI" id="CHEBI:29985"/>
        <dbReference type="ChEBI" id="CHEBI:30616"/>
        <dbReference type="ChEBI" id="CHEBI:37563"/>
        <dbReference type="ChEBI" id="CHEBI:43474"/>
        <dbReference type="ChEBI" id="CHEBI:46398"/>
        <dbReference type="ChEBI" id="CHEBI:58359"/>
        <dbReference type="ChEBI" id="CHEBI:456216"/>
        <dbReference type="EC" id="6.3.4.2"/>
    </reaction>
</comment>
<comment type="catalytic activity">
    <reaction evidence="1">
        <text>L-glutamine + H2O = L-glutamate + NH4(+)</text>
        <dbReference type="Rhea" id="RHEA:15889"/>
        <dbReference type="ChEBI" id="CHEBI:15377"/>
        <dbReference type="ChEBI" id="CHEBI:28938"/>
        <dbReference type="ChEBI" id="CHEBI:29985"/>
        <dbReference type="ChEBI" id="CHEBI:58359"/>
    </reaction>
</comment>
<comment type="catalytic activity">
    <reaction evidence="1">
        <text>UTP + NH4(+) + ATP = CTP + ADP + phosphate + 2 H(+)</text>
        <dbReference type="Rhea" id="RHEA:16597"/>
        <dbReference type="ChEBI" id="CHEBI:15378"/>
        <dbReference type="ChEBI" id="CHEBI:28938"/>
        <dbReference type="ChEBI" id="CHEBI:30616"/>
        <dbReference type="ChEBI" id="CHEBI:37563"/>
        <dbReference type="ChEBI" id="CHEBI:43474"/>
        <dbReference type="ChEBI" id="CHEBI:46398"/>
        <dbReference type="ChEBI" id="CHEBI:456216"/>
    </reaction>
</comment>
<comment type="activity regulation">
    <text evidence="1">Allosterically activated by GTP, when glutamine is the substrate; GTP has no effect on the reaction when ammonia is the substrate. The allosteric effector GTP functions by stabilizing the protein conformation that binds the tetrahedral intermediate(s) formed during glutamine hydrolysis. Inhibited by the product CTP, via allosteric rather than competitive inhibition.</text>
</comment>
<comment type="pathway">
    <text evidence="1">Pyrimidine metabolism; CTP biosynthesis via de novo pathway; CTP from UDP: step 2/2.</text>
</comment>
<comment type="subunit">
    <text evidence="1">Homotetramer.</text>
</comment>
<comment type="miscellaneous">
    <text evidence="1">CTPSs have evolved a hybrid strategy for distinguishing between UTP and CTP. The overlapping regions of the product feedback inhibitory and substrate sites recognize a common feature in both compounds, the triphosphate moiety. To differentiate isosteric substrate and product pyrimidine rings, an additional pocket far from the expected kinase/ligase catalytic site, specifically recognizes the cytosine and ribose portions of the product inhibitor.</text>
</comment>
<comment type="similarity">
    <text evidence="1">Belongs to the CTP synthase family.</text>
</comment>
<name>PYRG_RHOP5</name>
<organism>
    <name type="scientific">Rhodopseudomonas palustris (strain BisA53)</name>
    <dbReference type="NCBI Taxonomy" id="316055"/>
    <lineage>
        <taxon>Bacteria</taxon>
        <taxon>Pseudomonadati</taxon>
        <taxon>Pseudomonadota</taxon>
        <taxon>Alphaproteobacteria</taxon>
        <taxon>Hyphomicrobiales</taxon>
        <taxon>Nitrobacteraceae</taxon>
        <taxon>Rhodopseudomonas</taxon>
    </lineage>
</organism>
<gene>
    <name evidence="1" type="primary">pyrG</name>
    <name type="ordered locus">RPE_2595</name>
</gene>
<evidence type="ECO:0000255" key="1">
    <source>
        <dbReference type="HAMAP-Rule" id="MF_01227"/>
    </source>
</evidence>
<accession>Q07NF1</accession>
<proteinExistence type="inferred from homology"/>
<dbReference type="EC" id="6.3.4.2" evidence="1"/>
<dbReference type="EMBL" id="CP000463">
    <property type="protein sequence ID" value="ABJ06533.1"/>
    <property type="molecule type" value="Genomic_DNA"/>
</dbReference>
<dbReference type="SMR" id="Q07NF1"/>
<dbReference type="STRING" id="316055.RPE_2595"/>
<dbReference type="KEGG" id="rpe:RPE_2595"/>
<dbReference type="eggNOG" id="COG0504">
    <property type="taxonomic scope" value="Bacteria"/>
</dbReference>
<dbReference type="HOGENOM" id="CLU_011675_5_0_5"/>
<dbReference type="OrthoDB" id="9801107at2"/>
<dbReference type="UniPathway" id="UPA00159">
    <property type="reaction ID" value="UER00277"/>
</dbReference>
<dbReference type="GO" id="GO:0005829">
    <property type="term" value="C:cytosol"/>
    <property type="evidence" value="ECO:0007669"/>
    <property type="project" value="TreeGrafter"/>
</dbReference>
<dbReference type="GO" id="GO:0005524">
    <property type="term" value="F:ATP binding"/>
    <property type="evidence" value="ECO:0007669"/>
    <property type="project" value="UniProtKB-KW"/>
</dbReference>
<dbReference type="GO" id="GO:0003883">
    <property type="term" value="F:CTP synthase activity"/>
    <property type="evidence" value="ECO:0007669"/>
    <property type="project" value="UniProtKB-UniRule"/>
</dbReference>
<dbReference type="GO" id="GO:0004359">
    <property type="term" value="F:glutaminase activity"/>
    <property type="evidence" value="ECO:0007669"/>
    <property type="project" value="RHEA"/>
</dbReference>
<dbReference type="GO" id="GO:0042802">
    <property type="term" value="F:identical protein binding"/>
    <property type="evidence" value="ECO:0007669"/>
    <property type="project" value="TreeGrafter"/>
</dbReference>
<dbReference type="GO" id="GO:0046872">
    <property type="term" value="F:metal ion binding"/>
    <property type="evidence" value="ECO:0007669"/>
    <property type="project" value="UniProtKB-KW"/>
</dbReference>
<dbReference type="GO" id="GO:0044210">
    <property type="term" value="P:'de novo' CTP biosynthetic process"/>
    <property type="evidence" value="ECO:0007669"/>
    <property type="project" value="UniProtKB-UniRule"/>
</dbReference>
<dbReference type="GO" id="GO:0019856">
    <property type="term" value="P:pyrimidine nucleobase biosynthetic process"/>
    <property type="evidence" value="ECO:0007669"/>
    <property type="project" value="TreeGrafter"/>
</dbReference>
<dbReference type="CDD" id="cd03113">
    <property type="entry name" value="CTPS_N"/>
    <property type="match status" value="1"/>
</dbReference>
<dbReference type="CDD" id="cd01746">
    <property type="entry name" value="GATase1_CTP_Synthase"/>
    <property type="match status" value="1"/>
</dbReference>
<dbReference type="FunFam" id="3.40.50.300:FF:000009">
    <property type="entry name" value="CTP synthase"/>
    <property type="match status" value="1"/>
</dbReference>
<dbReference type="FunFam" id="3.40.50.880:FF:000002">
    <property type="entry name" value="CTP synthase"/>
    <property type="match status" value="1"/>
</dbReference>
<dbReference type="Gene3D" id="3.40.50.880">
    <property type="match status" value="1"/>
</dbReference>
<dbReference type="Gene3D" id="3.40.50.300">
    <property type="entry name" value="P-loop containing nucleotide triphosphate hydrolases"/>
    <property type="match status" value="1"/>
</dbReference>
<dbReference type="HAMAP" id="MF_01227">
    <property type="entry name" value="PyrG"/>
    <property type="match status" value="1"/>
</dbReference>
<dbReference type="InterPro" id="IPR029062">
    <property type="entry name" value="Class_I_gatase-like"/>
</dbReference>
<dbReference type="InterPro" id="IPR004468">
    <property type="entry name" value="CTP_synthase"/>
</dbReference>
<dbReference type="InterPro" id="IPR017456">
    <property type="entry name" value="CTP_synthase_N"/>
</dbReference>
<dbReference type="InterPro" id="IPR017926">
    <property type="entry name" value="GATASE"/>
</dbReference>
<dbReference type="InterPro" id="IPR033828">
    <property type="entry name" value="GATase1_CTP_Synthase"/>
</dbReference>
<dbReference type="InterPro" id="IPR027417">
    <property type="entry name" value="P-loop_NTPase"/>
</dbReference>
<dbReference type="NCBIfam" id="NF003792">
    <property type="entry name" value="PRK05380.1"/>
    <property type="match status" value="1"/>
</dbReference>
<dbReference type="NCBIfam" id="TIGR00337">
    <property type="entry name" value="PyrG"/>
    <property type="match status" value="1"/>
</dbReference>
<dbReference type="PANTHER" id="PTHR11550">
    <property type="entry name" value="CTP SYNTHASE"/>
    <property type="match status" value="1"/>
</dbReference>
<dbReference type="PANTHER" id="PTHR11550:SF0">
    <property type="entry name" value="CTP SYNTHASE-RELATED"/>
    <property type="match status" value="1"/>
</dbReference>
<dbReference type="Pfam" id="PF06418">
    <property type="entry name" value="CTP_synth_N"/>
    <property type="match status" value="1"/>
</dbReference>
<dbReference type="Pfam" id="PF00117">
    <property type="entry name" value="GATase"/>
    <property type="match status" value="1"/>
</dbReference>
<dbReference type="SUPFAM" id="SSF52317">
    <property type="entry name" value="Class I glutamine amidotransferase-like"/>
    <property type="match status" value="1"/>
</dbReference>
<dbReference type="SUPFAM" id="SSF52540">
    <property type="entry name" value="P-loop containing nucleoside triphosphate hydrolases"/>
    <property type="match status" value="1"/>
</dbReference>
<dbReference type="PROSITE" id="PS51273">
    <property type="entry name" value="GATASE_TYPE_1"/>
    <property type="match status" value="1"/>
</dbReference>
<keyword id="KW-0067">ATP-binding</keyword>
<keyword id="KW-0315">Glutamine amidotransferase</keyword>
<keyword id="KW-0436">Ligase</keyword>
<keyword id="KW-0460">Magnesium</keyword>
<keyword id="KW-0479">Metal-binding</keyword>
<keyword id="KW-0547">Nucleotide-binding</keyword>
<keyword id="KW-0665">Pyrimidine biosynthesis</keyword>
<reference key="1">
    <citation type="submission" date="2006-09" db="EMBL/GenBank/DDBJ databases">
        <title>Complete sequence of Rhodopseudomonas palustris BisA53.</title>
        <authorList>
            <consortium name="US DOE Joint Genome Institute"/>
            <person name="Copeland A."/>
            <person name="Lucas S."/>
            <person name="Lapidus A."/>
            <person name="Barry K."/>
            <person name="Detter J.C."/>
            <person name="Glavina del Rio T."/>
            <person name="Hammon N."/>
            <person name="Israni S."/>
            <person name="Dalin E."/>
            <person name="Tice H."/>
            <person name="Pitluck S."/>
            <person name="Chain P."/>
            <person name="Malfatti S."/>
            <person name="Shin M."/>
            <person name="Vergez L."/>
            <person name="Schmutz J."/>
            <person name="Larimer F."/>
            <person name="Land M."/>
            <person name="Hauser L."/>
            <person name="Pelletier D.A."/>
            <person name="Kyrpides N."/>
            <person name="Kim E."/>
            <person name="Harwood C.S."/>
            <person name="Oda Y."/>
            <person name="Richardson P."/>
        </authorList>
    </citation>
    <scope>NUCLEOTIDE SEQUENCE [LARGE SCALE GENOMIC DNA]</scope>
    <source>
        <strain>BisA53</strain>
    </source>
</reference>